<proteinExistence type="inferred from homology"/>
<dbReference type="EC" id="2.1.1.319"/>
<dbReference type="EMBL" id="CM000131">
    <property type="protein sequence ID" value="EAY99613.1"/>
    <property type="molecule type" value="Genomic_DNA"/>
</dbReference>
<dbReference type="SMR" id="A2Y953"/>
<dbReference type="STRING" id="39946.A2Y953"/>
<dbReference type="EnsemblPlants" id="BGIOSGA022276-TA">
    <property type="protein sequence ID" value="BGIOSGA022276-PA"/>
    <property type="gene ID" value="BGIOSGA022276"/>
</dbReference>
<dbReference type="EnsemblPlants" id="OsGoSa_06g0002990.01">
    <property type="protein sequence ID" value="OsGoSa_06g0002990.01"/>
    <property type="gene ID" value="OsGoSa_06g0002990"/>
</dbReference>
<dbReference type="EnsemblPlants" id="OsKYG_06g0002990.01">
    <property type="protein sequence ID" value="OsKYG_06g0002990.01"/>
    <property type="gene ID" value="OsKYG_06g0002990"/>
</dbReference>
<dbReference type="EnsemblPlants" id="OsLima_06g0003100.01">
    <property type="protein sequence ID" value="OsLima_06g0003100.01"/>
    <property type="gene ID" value="OsLima_06g0003100"/>
</dbReference>
<dbReference type="EnsemblPlants" id="OsLiXu_06g0003020.01">
    <property type="protein sequence ID" value="OsLiXu_06g0003020.01"/>
    <property type="gene ID" value="OsLiXu_06g0003020"/>
</dbReference>
<dbReference type="EnsemblPlants" id="OsZS97_06G002970_02">
    <property type="protein sequence ID" value="OsZS97_06G002970_02"/>
    <property type="gene ID" value="OsZS97_06G002970"/>
</dbReference>
<dbReference type="Gramene" id="BGIOSGA022276-TA">
    <property type="protein sequence ID" value="BGIOSGA022276-PA"/>
    <property type="gene ID" value="BGIOSGA022276"/>
</dbReference>
<dbReference type="Gramene" id="OsGoSa_06g0002990.01">
    <property type="protein sequence ID" value="OsGoSa_06g0002990.01"/>
    <property type="gene ID" value="OsGoSa_06g0002990"/>
</dbReference>
<dbReference type="Gramene" id="OsKYG_06g0002990.01">
    <property type="protein sequence ID" value="OsKYG_06g0002990.01"/>
    <property type="gene ID" value="OsKYG_06g0002990"/>
</dbReference>
<dbReference type="Gramene" id="OsLima_06g0003100.01">
    <property type="protein sequence ID" value="OsLima_06g0003100.01"/>
    <property type="gene ID" value="OsLima_06g0003100"/>
</dbReference>
<dbReference type="Gramene" id="OsLiXu_06g0003020.01">
    <property type="protein sequence ID" value="OsLiXu_06g0003020.01"/>
    <property type="gene ID" value="OsLiXu_06g0003020"/>
</dbReference>
<dbReference type="Gramene" id="OsZS97_06G002970_02">
    <property type="protein sequence ID" value="OsZS97_06G002970_02"/>
    <property type="gene ID" value="OsZS97_06G002970"/>
</dbReference>
<dbReference type="HOGENOM" id="CLU_017375_1_2_1"/>
<dbReference type="OMA" id="NSEPTHW"/>
<dbReference type="OrthoDB" id="7848332at2759"/>
<dbReference type="Proteomes" id="UP000007015">
    <property type="component" value="Chromosome 6"/>
</dbReference>
<dbReference type="GO" id="GO:0005634">
    <property type="term" value="C:nucleus"/>
    <property type="evidence" value="ECO:0007669"/>
    <property type="project" value="TreeGrafter"/>
</dbReference>
<dbReference type="GO" id="GO:0008469">
    <property type="term" value="F:histone arginine N-methyltransferase activity"/>
    <property type="evidence" value="ECO:0007669"/>
    <property type="project" value="EnsemblPlants"/>
</dbReference>
<dbReference type="GO" id="GO:0035242">
    <property type="term" value="F:protein-arginine omega-N asymmetric methyltransferase activity"/>
    <property type="evidence" value="ECO:0007669"/>
    <property type="project" value="UniProtKB-EC"/>
</dbReference>
<dbReference type="GO" id="GO:0035241">
    <property type="term" value="F:protein-arginine omega-N monomethyltransferase activity"/>
    <property type="evidence" value="ECO:0007669"/>
    <property type="project" value="EnsemblPlants"/>
</dbReference>
<dbReference type="GO" id="GO:0032259">
    <property type="term" value="P:methylation"/>
    <property type="evidence" value="ECO:0007669"/>
    <property type="project" value="UniProtKB-KW"/>
</dbReference>
<dbReference type="GO" id="GO:0010228">
    <property type="term" value="P:vegetative to reproductive phase transition of meristem"/>
    <property type="evidence" value="ECO:0007669"/>
    <property type="project" value="EnsemblPlants"/>
</dbReference>
<dbReference type="CDD" id="cd02440">
    <property type="entry name" value="AdoMet_MTases"/>
    <property type="match status" value="1"/>
</dbReference>
<dbReference type="FunFam" id="2.70.160.11:FF:000012">
    <property type="entry name" value="Protein arginine N-methyltransferase PRMT10"/>
    <property type="match status" value="1"/>
</dbReference>
<dbReference type="FunFam" id="3.40.50.150:FF:000132">
    <property type="entry name" value="Protein arginine N-methyltransferase PRMT10"/>
    <property type="match status" value="1"/>
</dbReference>
<dbReference type="Gene3D" id="2.70.160.11">
    <property type="entry name" value="Hnrnp arginine n-methyltransferase1"/>
    <property type="match status" value="1"/>
</dbReference>
<dbReference type="Gene3D" id="3.40.50.150">
    <property type="entry name" value="Vaccinia Virus protein VP39"/>
    <property type="match status" value="1"/>
</dbReference>
<dbReference type="InterPro" id="IPR025799">
    <property type="entry name" value="Arg_MeTrfase"/>
</dbReference>
<dbReference type="InterPro" id="IPR055135">
    <property type="entry name" value="PRMT_dom"/>
</dbReference>
<dbReference type="InterPro" id="IPR029063">
    <property type="entry name" value="SAM-dependent_MTases_sf"/>
</dbReference>
<dbReference type="PANTHER" id="PTHR11006">
    <property type="entry name" value="PROTEIN ARGININE N-METHYLTRANSFERASE"/>
    <property type="match status" value="1"/>
</dbReference>
<dbReference type="PANTHER" id="PTHR11006:SF68">
    <property type="entry name" value="PROTEIN ARGININE N-METHYLTRANSFERASE PRMT10"/>
    <property type="match status" value="1"/>
</dbReference>
<dbReference type="Pfam" id="PF06325">
    <property type="entry name" value="PrmA"/>
    <property type="match status" value="1"/>
</dbReference>
<dbReference type="Pfam" id="PF22528">
    <property type="entry name" value="PRMT_C"/>
    <property type="match status" value="1"/>
</dbReference>
<dbReference type="SUPFAM" id="SSF53335">
    <property type="entry name" value="S-adenosyl-L-methionine-dependent methyltransferases"/>
    <property type="match status" value="1"/>
</dbReference>
<dbReference type="PROSITE" id="PS51678">
    <property type="entry name" value="SAM_MT_PRMT"/>
    <property type="match status" value="1"/>
</dbReference>
<organism>
    <name type="scientific">Oryza sativa subsp. indica</name>
    <name type="common">Rice</name>
    <dbReference type="NCBI Taxonomy" id="39946"/>
    <lineage>
        <taxon>Eukaryota</taxon>
        <taxon>Viridiplantae</taxon>
        <taxon>Streptophyta</taxon>
        <taxon>Embryophyta</taxon>
        <taxon>Tracheophyta</taxon>
        <taxon>Spermatophyta</taxon>
        <taxon>Magnoliopsida</taxon>
        <taxon>Liliopsida</taxon>
        <taxon>Poales</taxon>
        <taxon>Poaceae</taxon>
        <taxon>BOP clade</taxon>
        <taxon>Oryzoideae</taxon>
        <taxon>Oryzeae</taxon>
        <taxon>Oryzinae</taxon>
        <taxon>Oryza</taxon>
        <taxon>Oryza sativa</taxon>
    </lineage>
</organism>
<gene>
    <name type="primary">PRMT10</name>
    <name type="synonym">PRMT4.2</name>
    <name type="ORF">OsI_020846</name>
</gene>
<name>ANM10_ORYSI</name>
<protein>
    <recommendedName>
        <fullName>Protein arginine N-methyltransferase PRMT10</fullName>
        <ecNumber>2.1.1.319</ecNumber>
    </recommendedName>
</protein>
<accession>A2Y953</accession>
<feature type="chain" id="PRO_0000294009" description="Protein arginine N-methyltransferase PRMT10">
    <location>
        <begin position="1"/>
        <end position="382"/>
    </location>
</feature>
<feature type="domain" description="SAM-dependent MTase PRMT-type" evidence="2">
    <location>
        <begin position="28"/>
        <end position="359"/>
    </location>
</feature>
<feature type="region of interest" description="Disordered" evidence="3">
    <location>
        <begin position="1"/>
        <end position="21"/>
    </location>
</feature>
<feature type="region of interest" description="Dimerization arm" evidence="1">
    <location>
        <begin position="189"/>
        <end position="229"/>
    </location>
</feature>
<feature type="compositionally biased region" description="Low complexity" evidence="3">
    <location>
        <begin position="7"/>
        <end position="17"/>
    </location>
</feature>
<feature type="active site" evidence="1">
    <location>
        <position position="142"/>
    </location>
</feature>
<feature type="active site" evidence="1">
    <location>
        <position position="151"/>
    </location>
</feature>
<evidence type="ECO:0000250" key="1"/>
<evidence type="ECO:0000255" key="2">
    <source>
        <dbReference type="PROSITE-ProRule" id="PRU01015"/>
    </source>
</evidence>
<evidence type="ECO:0000256" key="3">
    <source>
        <dbReference type="SAM" id="MobiDB-lite"/>
    </source>
</evidence>
<keyword id="KW-0489">Methyltransferase</keyword>
<keyword id="KW-1185">Reference proteome</keyword>
<keyword id="KW-0949">S-adenosyl-L-methionine</keyword>
<keyword id="KW-0808">Transferase</keyword>
<sequence length="382" mass="42876">MASLPNGAASASAASSAAGGGPAVVDKEVDFANYFCTYSYLYHQKEMLCDRVRMDAYHSAVFRNAHHFRGKVVLDVGTGSGILAIWSAQAGARKVYAVEATNMAEHARELARANDVADIVEVIQGSMEDVVLPEKVDVIISEWMGYFLLRESMFDSVICARDRWLKPDGVMYPSHARMWLAPIRSDLAENKMEDLEIAMHDWNLFVEDTESYYGVNMNVLTKAYRAEHEKYYLKSAIWNNLHPNQVIGQAAVIKEIDCLTATVDEIREVRAQVTMPIKLDMTRLAALAGWFDVHFRGSKQNPATQEVELSTAPDVNGGTHWGQQVFLLTPPLKVNEGDNVKVSFTMVRSKENHRLMDMEFTYELHESSGKQLPAITTKIYLE</sequence>
<comment type="function">
    <text evidence="1">Methylates (mono and asymmetric dimethylation) the guanidino nitrogens of arginyl residues in some proteins.</text>
</comment>
<comment type="catalytic activity">
    <reaction>
        <text>L-arginyl-[protein] + 2 S-adenosyl-L-methionine = N(omega),N(omega)-dimethyl-L-arginyl-[protein] + 2 S-adenosyl-L-homocysteine + 2 H(+)</text>
        <dbReference type="Rhea" id="RHEA:48096"/>
        <dbReference type="Rhea" id="RHEA-COMP:10532"/>
        <dbReference type="Rhea" id="RHEA-COMP:11991"/>
        <dbReference type="ChEBI" id="CHEBI:15378"/>
        <dbReference type="ChEBI" id="CHEBI:29965"/>
        <dbReference type="ChEBI" id="CHEBI:57856"/>
        <dbReference type="ChEBI" id="CHEBI:59789"/>
        <dbReference type="ChEBI" id="CHEBI:61897"/>
        <dbReference type="EC" id="2.1.1.319"/>
    </reaction>
</comment>
<comment type="subunit">
    <text evidence="1">Ring-like homodimer.</text>
</comment>
<comment type="similarity">
    <text evidence="2">Belongs to the class I-like SAM-binding methyltransferase superfamily. Protein arginine N-methyltransferase family.</text>
</comment>
<reference key="1">
    <citation type="journal article" date="2005" name="PLoS Biol.">
        <title>The genomes of Oryza sativa: a history of duplications.</title>
        <authorList>
            <person name="Yu J."/>
            <person name="Wang J."/>
            <person name="Lin W."/>
            <person name="Li S."/>
            <person name="Li H."/>
            <person name="Zhou J."/>
            <person name="Ni P."/>
            <person name="Dong W."/>
            <person name="Hu S."/>
            <person name="Zeng C."/>
            <person name="Zhang J."/>
            <person name="Zhang Y."/>
            <person name="Li R."/>
            <person name="Xu Z."/>
            <person name="Li S."/>
            <person name="Li X."/>
            <person name="Zheng H."/>
            <person name="Cong L."/>
            <person name="Lin L."/>
            <person name="Yin J."/>
            <person name="Geng J."/>
            <person name="Li G."/>
            <person name="Shi J."/>
            <person name="Liu J."/>
            <person name="Lv H."/>
            <person name="Li J."/>
            <person name="Wang J."/>
            <person name="Deng Y."/>
            <person name="Ran L."/>
            <person name="Shi X."/>
            <person name="Wang X."/>
            <person name="Wu Q."/>
            <person name="Li C."/>
            <person name="Ren X."/>
            <person name="Wang J."/>
            <person name="Wang X."/>
            <person name="Li D."/>
            <person name="Liu D."/>
            <person name="Zhang X."/>
            <person name="Ji Z."/>
            <person name="Zhao W."/>
            <person name="Sun Y."/>
            <person name="Zhang Z."/>
            <person name="Bao J."/>
            <person name="Han Y."/>
            <person name="Dong L."/>
            <person name="Ji J."/>
            <person name="Chen P."/>
            <person name="Wu S."/>
            <person name="Liu J."/>
            <person name="Xiao Y."/>
            <person name="Bu D."/>
            <person name="Tan J."/>
            <person name="Yang L."/>
            <person name="Ye C."/>
            <person name="Zhang J."/>
            <person name="Xu J."/>
            <person name="Zhou Y."/>
            <person name="Yu Y."/>
            <person name="Zhang B."/>
            <person name="Zhuang S."/>
            <person name="Wei H."/>
            <person name="Liu B."/>
            <person name="Lei M."/>
            <person name="Yu H."/>
            <person name="Li Y."/>
            <person name="Xu H."/>
            <person name="Wei S."/>
            <person name="He X."/>
            <person name="Fang L."/>
            <person name="Zhang Z."/>
            <person name="Zhang Y."/>
            <person name="Huang X."/>
            <person name="Su Z."/>
            <person name="Tong W."/>
            <person name="Li J."/>
            <person name="Tong Z."/>
            <person name="Li S."/>
            <person name="Ye J."/>
            <person name="Wang L."/>
            <person name="Fang L."/>
            <person name="Lei T."/>
            <person name="Chen C.-S."/>
            <person name="Chen H.-C."/>
            <person name="Xu Z."/>
            <person name="Li H."/>
            <person name="Huang H."/>
            <person name="Zhang F."/>
            <person name="Xu H."/>
            <person name="Li N."/>
            <person name="Zhao C."/>
            <person name="Li S."/>
            <person name="Dong L."/>
            <person name="Huang Y."/>
            <person name="Li L."/>
            <person name="Xi Y."/>
            <person name="Qi Q."/>
            <person name="Li W."/>
            <person name="Zhang B."/>
            <person name="Hu W."/>
            <person name="Zhang Y."/>
            <person name="Tian X."/>
            <person name="Jiao Y."/>
            <person name="Liang X."/>
            <person name="Jin J."/>
            <person name="Gao L."/>
            <person name="Zheng W."/>
            <person name="Hao B."/>
            <person name="Liu S.-M."/>
            <person name="Wang W."/>
            <person name="Yuan L."/>
            <person name="Cao M."/>
            <person name="McDermott J."/>
            <person name="Samudrala R."/>
            <person name="Wang J."/>
            <person name="Wong G.K.-S."/>
            <person name="Yang H."/>
        </authorList>
    </citation>
    <scope>NUCLEOTIDE SEQUENCE [LARGE SCALE GENOMIC DNA]</scope>
    <source>
        <strain>cv. 93-11</strain>
    </source>
</reference>